<name>GCH4_THEMA</name>
<protein>
    <recommendedName>
        <fullName>GTP cyclohydrolase FolE2</fullName>
        <ecNumber>3.5.4.16</ecNumber>
    </recommendedName>
    <alternativeName>
        <fullName>GTP cyclohydrolase 1B</fullName>
    </alternativeName>
</protein>
<organism>
    <name type="scientific">Thermotoga maritima (strain ATCC 43589 / DSM 3109 / JCM 10099 / NBRC 100826 / MSB8)</name>
    <dbReference type="NCBI Taxonomy" id="243274"/>
    <lineage>
        <taxon>Bacteria</taxon>
        <taxon>Thermotogati</taxon>
        <taxon>Thermotogota</taxon>
        <taxon>Thermotogae</taxon>
        <taxon>Thermotogales</taxon>
        <taxon>Thermotogaceae</taxon>
        <taxon>Thermotoga</taxon>
    </lineage>
</organism>
<evidence type="ECO:0000250" key="1"/>
<evidence type="ECO:0000269" key="2">
    <source>
    </source>
</evidence>
<evidence type="ECO:0000305" key="3"/>
<accession>Q9WXP6</accession>
<dbReference type="EC" id="3.5.4.16"/>
<dbReference type="EMBL" id="AE000512">
    <property type="protein sequence ID" value="AAD35133.1"/>
    <property type="molecule type" value="Genomic_DNA"/>
</dbReference>
<dbReference type="PIR" id="D72425">
    <property type="entry name" value="D72425"/>
</dbReference>
<dbReference type="RefSeq" id="NP_227855.1">
    <property type="nucleotide sequence ID" value="NC_000853.1"/>
</dbReference>
<dbReference type="RefSeq" id="WP_004082504.1">
    <property type="nucleotide sequence ID" value="NZ_CP011107.1"/>
</dbReference>
<dbReference type="SMR" id="Q9WXP6"/>
<dbReference type="FunCoup" id="Q9WXP6">
    <property type="interactions" value="85"/>
</dbReference>
<dbReference type="STRING" id="243274.TM_0039"/>
<dbReference type="PaxDb" id="243274-THEMA_04605"/>
<dbReference type="EnsemblBacteria" id="AAD35133">
    <property type="protein sequence ID" value="AAD35133"/>
    <property type="gene ID" value="TM_0039"/>
</dbReference>
<dbReference type="KEGG" id="tma:TM0039"/>
<dbReference type="KEGG" id="tmi:THEMA_04605"/>
<dbReference type="KEGG" id="tmm:Tmari_0036"/>
<dbReference type="KEGG" id="tmw:THMA_0035"/>
<dbReference type="eggNOG" id="COG1469">
    <property type="taxonomic scope" value="Bacteria"/>
</dbReference>
<dbReference type="InParanoid" id="Q9WXP6"/>
<dbReference type="OrthoDB" id="9774824at2"/>
<dbReference type="UniPathway" id="UPA00848">
    <property type="reaction ID" value="UER00151"/>
</dbReference>
<dbReference type="Proteomes" id="UP000008183">
    <property type="component" value="Chromosome"/>
</dbReference>
<dbReference type="GO" id="GO:0003933">
    <property type="term" value="F:GTP cyclohydrolase activity"/>
    <property type="evidence" value="ECO:0000318"/>
    <property type="project" value="GO_Central"/>
</dbReference>
<dbReference type="GO" id="GO:0003934">
    <property type="term" value="F:GTP cyclohydrolase I activity"/>
    <property type="evidence" value="ECO:0007669"/>
    <property type="project" value="UniProtKB-UniRule"/>
</dbReference>
<dbReference type="GO" id="GO:0046654">
    <property type="term" value="P:tetrahydrofolate biosynthetic process"/>
    <property type="evidence" value="ECO:0007669"/>
    <property type="project" value="UniProtKB-UniRule"/>
</dbReference>
<dbReference type="Gene3D" id="3.10.270.10">
    <property type="entry name" value="Urate Oxidase"/>
    <property type="match status" value="1"/>
</dbReference>
<dbReference type="HAMAP" id="MF_01527_B">
    <property type="entry name" value="GTP_cyclohydrol_B"/>
    <property type="match status" value="1"/>
</dbReference>
<dbReference type="InterPro" id="IPR022838">
    <property type="entry name" value="GTP_cyclohydrolase_FolE2"/>
</dbReference>
<dbReference type="InterPro" id="IPR003801">
    <property type="entry name" value="GTP_cyclohydrolase_FolE2/MptA"/>
</dbReference>
<dbReference type="NCBIfam" id="NF010200">
    <property type="entry name" value="PRK13674.1-1"/>
    <property type="match status" value="1"/>
</dbReference>
<dbReference type="PANTHER" id="PTHR36445">
    <property type="entry name" value="GTP CYCLOHYDROLASE MPTA"/>
    <property type="match status" value="1"/>
</dbReference>
<dbReference type="PANTHER" id="PTHR36445:SF1">
    <property type="entry name" value="GTP CYCLOHYDROLASE MPTA"/>
    <property type="match status" value="1"/>
</dbReference>
<dbReference type="Pfam" id="PF02649">
    <property type="entry name" value="GCHY-1"/>
    <property type="match status" value="1"/>
</dbReference>
<keyword id="KW-0378">Hydrolase</keyword>
<keyword id="KW-1185">Reference proteome</keyword>
<sequence>MKDVQNEKDPRMVPLKKVGIKDLHWPLKVILKEDGYQSTVAQISCSVDLHREKRGIHMSRFIEVLNKLEVITPQIFEEILDDLIEIMEAKRAHLEIHFPYFIWKESPVSRKKSPLKVDCFVEAEKEKNFSFKIGVRTPVHTLCPCSKEISDYGAHNQRAFVEITVKTRKFIWFEDLVEIAEKNASSPLYTLLKRPDEKFVTEKAYENPRFVEDVARDVALELEKDPRITWYRVYVESMESIHNHNAFACVEKGDFVLEG</sequence>
<comment type="function">
    <text evidence="2">Converts GTP to 7,8-dihydroneopterin triphosphate.</text>
</comment>
<comment type="catalytic activity">
    <reaction evidence="2">
        <text>GTP + H2O = 7,8-dihydroneopterin 3'-triphosphate + formate + H(+)</text>
        <dbReference type="Rhea" id="RHEA:17473"/>
        <dbReference type="ChEBI" id="CHEBI:15377"/>
        <dbReference type="ChEBI" id="CHEBI:15378"/>
        <dbReference type="ChEBI" id="CHEBI:15740"/>
        <dbReference type="ChEBI" id="CHEBI:37565"/>
        <dbReference type="ChEBI" id="CHEBI:58462"/>
        <dbReference type="EC" id="3.5.4.16"/>
    </reaction>
</comment>
<comment type="pathway">
    <text>Cofactor biosynthesis; 7,8-dihydroneopterin triphosphate biosynthesis; 7,8-dihydroneopterin triphosphate from GTP: step 1/1.</text>
</comment>
<comment type="similarity">
    <text evidence="3">Belongs to the GTP cyclohydrolase IV family.</text>
</comment>
<feature type="chain" id="PRO_0000147732" description="GTP cyclohydrolase FolE2">
    <location>
        <begin position="1"/>
        <end position="259"/>
    </location>
</feature>
<feature type="site" description="May be catalytically important" evidence="1">
    <location>
        <position position="143"/>
    </location>
</feature>
<proteinExistence type="evidence at protein level"/>
<reference key="1">
    <citation type="journal article" date="1999" name="Nature">
        <title>Evidence for lateral gene transfer between Archaea and Bacteria from genome sequence of Thermotoga maritima.</title>
        <authorList>
            <person name="Nelson K.E."/>
            <person name="Clayton R.A."/>
            <person name="Gill S.R."/>
            <person name="Gwinn M.L."/>
            <person name="Dodson R.J."/>
            <person name="Haft D.H."/>
            <person name="Hickey E.K."/>
            <person name="Peterson J.D."/>
            <person name="Nelson W.C."/>
            <person name="Ketchum K.A."/>
            <person name="McDonald L.A."/>
            <person name="Utterback T.R."/>
            <person name="Malek J.A."/>
            <person name="Linher K.D."/>
            <person name="Garrett M.M."/>
            <person name="Stewart A.M."/>
            <person name="Cotton M.D."/>
            <person name="Pratt M.S."/>
            <person name="Phillips C.A."/>
            <person name="Richardson D.L."/>
            <person name="Heidelberg J.F."/>
            <person name="Sutton G.G."/>
            <person name="Fleischmann R.D."/>
            <person name="Eisen J.A."/>
            <person name="White O."/>
            <person name="Salzberg S.L."/>
            <person name="Smith H.O."/>
            <person name="Venter J.C."/>
            <person name="Fraser C.M."/>
        </authorList>
    </citation>
    <scope>NUCLEOTIDE SEQUENCE [LARGE SCALE GENOMIC DNA]</scope>
    <source>
        <strain>ATCC 43589 / DSM 3109 / JCM 10099 / NBRC 100826 / MSB8</strain>
    </source>
</reference>
<reference key="2">
    <citation type="journal article" date="2006" name="J. Biol. Chem.">
        <title>Discovery of a new prokaryotic type I GTP cyclohydrolase family.</title>
        <authorList>
            <person name="El Yacoubi B."/>
            <person name="Bonnett S."/>
            <person name="Anderson J.N."/>
            <person name="Swairjo M.A."/>
            <person name="Iwata-Reuyl D."/>
            <person name="de Crecy-Lagard V."/>
        </authorList>
    </citation>
    <scope>FUNCTION</scope>
    <scope>CATALYTIC ACTIVITY</scope>
</reference>
<gene>
    <name type="primary">folE2</name>
    <name type="ordered locus">TM_0039</name>
</gene>